<reference key="1">
    <citation type="journal article" date="2006" name="J. Bacteriol.">
        <title>The genome sequence of Methanosphaera stadtmanae reveals why this human intestinal archaeon is restricted to methanol and H2 for methane formation and ATP synthesis.</title>
        <authorList>
            <person name="Fricke W.F."/>
            <person name="Seedorf H."/>
            <person name="Henne A."/>
            <person name="Kruer M."/>
            <person name="Liesegang H."/>
            <person name="Hedderich R."/>
            <person name="Gottschalk G."/>
            <person name="Thauer R.K."/>
        </authorList>
    </citation>
    <scope>NUCLEOTIDE SEQUENCE [LARGE SCALE GENOMIC DNA]</scope>
    <source>
        <strain>ATCC 43021 / DSM 3091 / JCM 11832 / MCB-3</strain>
    </source>
</reference>
<organism>
    <name type="scientific">Methanosphaera stadtmanae (strain ATCC 43021 / DSM 3091 / JCM 11832 / MCB-3)</name>
    <dbReference type="NCBI Taxonomy" id="339860"/>
    <lineage>
        <taxon>Archaea</taxon>
        <taxon>Methanobacteriati</taxon>
        <taxon>Methanobacteriota</taxon>
        <taxon>Methanomada group</taxon>
        <taxon>Methanobacteria</taxon>
        <taxon>Methanobacteriales</taxon>
        <taxon>Methanobacteriaceae</taxon>
        <taxon>Methanosphaera</taxon>
    </lineage>
</organism>
<proteinExistence type="inferred from homology"/>
<sequence>MKRVVLTGTGSGVGKTTIATGIMKALSDEHKIQPFKVGPDYIDPSYHNCATGVSSRNLDSFFMSDGQIRQSFKNGMTSSHADYGIIEGVRGLYEGISPTNDIGSTSSIAKALNSPVILIINSRSLVRSAAAMTLGFKALDSRIDIEGVILNNVKSQKHYLKTKEAVEKLANTRVLGGIERDNSISMEQRHLGLIPAVEQERISGLVEKWGELIRENIDLDALMEIMDNSNPIINEYEPIWSPNKTKHKTRIAVPFDEAFNFYYKENLEALEYNNAKIEYFSPIHDEQLPSVDALYIGGGYPEIFKKELSKNTTMLESIKEFSQDNHPIYAECGGLMYLCKTIDSLPMVDVFPYHSMLTKRVQGLSYTIAHVQRDNPILKKNTTYHGHEFHYSKVEYTGSNSNDFAFSMRRGVGITGKYDGLLKNNTLASYIHTHTACLPDFGYNFTQSAYENK</sequence>
<keyword id="KW-0067">ATP-binding</keyword>
<keyword id="KW-0169">Cobalamin biosynthesis</keyword>
<keyword id="KW-0315">Glutamine amidotransferase</keyword>
<keyword id="KW-0436">Ligase</keyword>
<keyword id="KW-0460">Magnesium</keyword>
<keyword id="KW-0484">Methanogenesis</keyword>
<keyword id="KW-0547">Nucleotide-binding</keyword>
<keyword id="KW-1185">Reference proteome</keyword>
<protein>
    <recommendedName>
        <fullName evidence="1">Cobyrinate a,c-diamide synthase</fullName>
        <ecNumber evidence="1">6.3.5.11</ecNumber>
    </recommendedName>
    <alternativeName>
        <fullName evidence="1">Cobyrinic acid a,c-diamide synthetase</fullName>
    </alternativeName>
    <alternativeName>
        <fullName evidence="1">Ni-sirohydrochlorin a,c-diamide synthase</fullName>
        <ecNumber evidence="1">6.3.5.12</ecNumber>
    </alternativeName>
    <alternativeName>
        <fullName evidence="1">Ni-sirohydrochlorin a,c-diamide synthetase</fullName>
    </alternativeName>
</protein>
<accession>Q2NHQ3</accession>
<comment type="function">
    <text evidence="1">Catalyzes the ATP-dependent amidation of the two carboxylate groups at positions a and c of cobyrinate, using either L-glutamine or ammonia as the nitrogen source. Involved in the biosynthesis of the unique nickel-containing tetrapyrrole coenzyme F430, the prosthetic group of methyl-coenzyme M reductase (MCR), which plays a key role in methanogenesis and anaerobic methane oxidation. Catalyzes the ATP-dependent amidation of the two carboxylate groups at positions a and c of Ni-sirohydrochlorin, using L-glutamine or ammonia as the nitrogen source.</text>
</comment>
<comment type="catalytic activity">
    <reaction evidence="1">
        <text>cob(II)yrinate + 2 L-glutamine + 2 ATP + 2 H2O = cob(II)yrinate a,c diamide + 2 L-glutamate + 2 ADP + 2 phosphate + 2 H(+)</text>
        <dbReference type="Rhea" id="RHEA:26289"/>
        <dbReference type="ChEBI" id="CHEBI:15377"/>
        <dbReference type="ChEBI" id="CHEBI:15378"/>
        <dbReference type="ChEBI" id="CHEBI:29985"/>
        <dbReference type="ChEBI" id="CHEBI:30616"/>
        <dbReference type="ChEBI" id="CHEBI:43474"/>
        <dbReference type="ChEBI" id="CHEBI:58359"/>
        <dbReference type="ChEBI" id="CHEBI:58537"/>
        <dbReference type="ChEBI" id="CHEBI:58894"/>
        <dbReference type="ChEBI" id="CHEBI:456216"/>
        <dbReference type="EC" id="6.3.5.11"/>
    </reaction>
</comment>
<comment type="catalytic activity">
    <reaction evidence="1">
        <text>Ni-sirohydrochlorin + 2 L-glutamine + 2 ATP + 2 H2O = Ni-sirohydrochlorin a,c-diamide + 2 L-glutamate + 2 ADP + 2 phosphate + 2 H(+)</text>
        <dbReference type="Rhea" id="RHEA:52896"/>
        <dbReference type="ChEBI" id="CHEBI:15377"/>
        <dbReference type="ChEBI" id="CHEBI:15378"/>
        <dbReference type="ChEBI" id="CHEBI:29985"/>
        <dbReference type="ChEBI" id="CHEBI:30616"/>
        <dbReference type="ChEBI" id="CHEBI:43474"/>
        <dbReference type="ChEBI" id="CHEBI:58359"/>
        <dbReference type="ChEBI" id="CHEBI:136841"/>
        <dbReference type="ChEBI" id="CHEBI:136887"/>
        <dbReference type="ChEBI" id="CHEBI:456216"/>
        <dbReference type="EC" id="6.3.5.12"/>
    </reaction>
</comment>
<comment type="cofactor">
    <cofactor evidence="1">
        <name>Mg(2+)</name>
        <dbReference type="ChEBI" id="CHEBI:18420"/>
    </cofactor>
</comment>
<comment type="pathway">
    <text evidence="1">Cofactor biosynthesis; adenosylcobalamin biosynthesis; cob(II)yrinate a,c-diamide from sirohydrochlorin (anaerobic route): step 10/10.</text>
</comment>
<comment type="domain">
    <text evidence="1">Comprises of two domains. The C-terminal domain contains the binding site for glutamine and catalyzes the hydrolysis of this substrate to glutamate and ammonia. The N-terminal domain is anticipated to bind ATP, and cobyrinate or Ni-sirohydrochlorin, and catalyzes the ultimate synthesis of the diamide product. The ammonia produced via the glutaminase domain is probably translocated to the adjacent domain via a molecular tunnel, where it reacts with an activated intermediate.</text>
</comment>
<comment type="miscellaneous">
    <text evidence="1">The a and c carboxylates of cobyrinate and Ni-sirohydrochlorin are activated for nucleophilic attack via formation of a phosphorylated intermediate by ATP. CbiA catalyzes first the amidation of the c-carboxylate, and then that of the a-carboxylate.</text>
</comment>
<comment type="similarity">
    <text evidence="1">Belongs to the CobB/CbiA family.</text>
</comment>
<name>CBIA_METST</name>
<gene>
    <name evidence="1" type="primary">cbiA</name>
    <name evidence="1" type="synonym">cfbB</name>
    <name type="ordered locus">Msp_0162</name>
</gene>
<feature type="chain" id="PRO_1000002293" description="Cobyrinate a,c-diamide synthase">
    <location>
        <begin position="1"/>
        <end position="453"/>
    </location>
</feature>
<feature type="domain" description="GATase cobBQ-type" evidence="1">
    <location>
        <begin position="250"/>
        <end position="440"/>
    </location>
</feature>
<feature type="active site" description="Nucleophile" evidence="1">
    <location>
        <position position="332"/>
    </location>
</feature>
<feature type="site" description="Increases nucleophilicity of active site Cys" evidence="1">
    <location>
        <position position="432"/>
    </location>
</feature>
<evidence type="ECO:0000255" key="1">
    <source>
        <dbReference type="HAMAP-Rule" id="MF_00027"/>
    </source>
</evidence>
<dbReference type="EC" id="6.3.5.11" evidence="1"/>
<dbReference type="EC" id="6.3.5.12" evidence="1"/>
<dbReference type="EMBL" id="CP000102">
    <property type="protein sequence ID" value="ABC56580.1"/>
    <property type="molecule type" value="Genomic_DNA"/>
</dbReference>
<dbReference type="RefSeq" id="WP_011405779.1">
    <property type="nucleotide sequence ID" value="NC_007681.1"/>
</dbReference>
<dbReference type="SMR" id="Q2NHQ3"/>
<dbReference type="STRING" id="339860.Msp_0162"/>
<dbReference type="GeneID" id="41324735"/>
<dbReference type="KEGG" id="mst:Msp_0162"/>
<dbReference type="eggNOG" id="arCOG00106">
    <property type="taxonomic scope" value="Archaea"/>
</dbReference>
<dbReference type="HOGENOM" id="CLU_022752_2_1_2"/>
<dbReference type="OrthoDB" id="8896at2157"/>
<dbReference type="UniPathway" id="UPA00148">
    <property type="reaction ID" value="UER00231"/>
</dbReference>
<dbReference type="Proteomes" id="UP000001931">
    <property type="component" value="Chromosome"/>
</dbReference>
<dbReference type="GO" id="GO:0005524">
    <property type="term" value="F:ATP binding"/>
    <property type="evidence" value="ECO:0007669"/>
    <property type="project" value="UniProtKB-UniRule"/>
</dbReference>
<dbReference type="GO" id="GO:0042242">
    <property type="term" value="F:cobyrinic acid a,c-diamide synthase activity"/>
    <property type="evidence" value="ECO:0007669"/>
    <property type="project" value="UniProtKB-UniRule"/>
</dbReference>
<dbReference type="GO" id="GO:0009236">
    <property type="term" value="P:cobalamin biosynthetic process"/>
    <property type="evidence" value="ECO:0007669"/>
    <property type="project" value="UniProtKB-UniRule"/>
</dbReference>
<dbReference type="GO" id="GO:0015948">
    <property type="term" value="P:methanogenesis"/>
    <property type="evidence" value="ECO:0007669"/>
    <property type="project" value="UniProtKB-KW"/>
</dbReference>
<dbReference type="CDD" id="cd05388">
    <property type="entry name" value="CobB_N"/>
    <property type="match status" value="1"/>
</dbReference>
<dbReference type="CDD" id="cd03130">
    <property type="entry name" value="GATase1_CobB"/>
    <property type="match status" value="1"/>
</dbReference>
<dbReference type="Gene3D" id="3.40.50.880">
    <property type="match status" value="1"/>
</dbReference>
<dbReference type="Gene3D" id="3.40.50.300">
    <property type="entry name" value="P-loop containing nucleotide triphosphate hydrolases"/>
    <property type="match status" value="1"/>
</dbReference>
<dbReference type="HAMAP" id="MF_00027">
    <property type="entry name" value="CobB_CbiA"/>
    <property type="match status" value="1"/>
</dbReference>
<dbReference type="InterPro" id="IPR004484">
    <property type="entry name" value="CbiA/CobB_synth"/>
</dbReference>
<dbReference type="InterPro" id="IPR029062">
    <property type="entry name" value="Class_I_gatase-like"/>
</dbReference>
<dbReference type="InterPro" id="IPR002586">
    <property type="entry name" value="CobQ/CobB/MinD/ParA_Nub-bd_dom"/>
</dbReference>
<dbReference type="InterPro" id="IPR011698">
    <property type="entry name" value="GATase_3"/>
</dbReference>
<dbReference type="InterPro" id="IPR027417">
    <property type="entry name" value="P-loop_NTPase"/>
</dbReference>
<dbReference type="NCBIfam" id="TIGR00379">
    <property type="entry name" value="cobB"/>
    <property type="match status" value="1"/>
</dbReference>
<dbReference type="NCBIfam" id="NF033195">
    <property type="entry name" value="F430_CfbB"/>
    <property type="match status" value="1"/>
</dbReference>
<dbReference type="NCBIfam" id="NF002204">
    <property type="entry name" value="PRK01077.1"/>
    <property type="match status" value="1"/>
</dbReference>
<dbReference type="PANTHER" id="PTHR43873">
    <property type="entry name" value="COBYRINATE A,C-DIAMIDE SYNTHASE"/>
    <property type="match status" value="1"/>
</dbReference>
<dbReference type="PANTHER" id="PTHR43873:SF1">
    <property type="entry name" value="COBYRINATE A,C-DIAMIDE SYNTHASE"/>
    <property type="match status" value="1"/>
</dbReference>
<dbReference type="Pfam" id="PF01656">
    <property type="entry name" value="CbiA"/>
    <property type="match status" value="1"/>
</dbReference>
<dbReference type="Pfam" id="PF07685">
    <property type="entry name" value="GATase_3"/>
    <property type="match status" value="1"/>
</dbReference>
<dbReference type="SUPFAM" id="SSF52317">
    <property type="entry name" value="Class I glutamine amidotransferase-like"/>
    <property type="match status" value="1"/>
</dbReference>
<dbReference type="SUPFAM" id="SSF52540">
    <property type="entry name" value="P-loop containing nucleoside triphosphate hydrolases"/>
    <property type="match status" value="1"/>
</dbReference>
<dbReference type="PROSITE" id="PS51274">
    <property type="entry name" value="GATASE_COBBQ"/>
    <property type="match status" value="1"/>
</dbReference>